<name>HSLV_THEMA</name>
<dbReference type="EC" id="3.4.25.2"/>
<dbReference type="EMBL" id="AE000512">
    <property type="protein sequence ID" value="AAD35606.1"/>
    <property type="molecule type" value="Genomic_DNA"/>
</dbReference>
<dbReference type="PIR" id="G72365">
    <property type="entry name" value="G72365"/>
</dbReference>
<dbReference type="RefSeq" id="NP_228331.1">
    <property type="nucleotide sequence ID" value="NC_000853.1"/>
</dbReference>
<dbReference type="RefSeq" id="WP_004081403.1">
    <property type="nucleotide sequence ID" value="NZ_CP011107.1"/>
</dbReference>
<dbReference type="PDB" id="1M4Y">
    <property type="method" value="X-ray"/>
    <property type="resolution" value="2.10 A"/>
    <property type="chains" value="A/B/C=6-176"/>
</dbReference>
<dbReference type="PDBsum" id="1M4Y"/>
<dbReference type="SMR" id="Q9WYZ1"/>
<dbReference type="FunCoup" id="Q9WYZ1">
    <property type="interactions" value="84"/>
</dbReference>
<dbReference type="STRING" id="243274.TM_0521"/>
<dbReference type="MEROPS" id="T01.006"/>
<dbReference type="PaxDb" id="243274-THEMA_02070"/>
<dbReference type="EnsemblBacteria" id="AAD35606">
    <property type="protein sequence ID" value="AAD35606"/>
    <property type="gene ID" value="TM_0521"/>
</dbReference>
<dbReference type="KEGG" id="tma:TM0521"/>
<dbReference type="KEGG" id="tmi:THEMA_02070"/>
<dbReference type="KEGG" id="tmm:Tmari_0517"/>
<dbReference type="KEGG" id="tmw:THMA_0533"/>
<dbReference type="eggNOG" id="COG5405">
    <property type="taxonomic scope" value="Bacteria"/>
</dbReference>
<dbReference type="InParanoid" id="Q9WYZ1"/>
<dbReference type="OrthoDB" id="9804884at2"/>
<dbReference type="EvolutionaryTrace" id="Q9WYZ1"/>
<dbReference type="Proteomes" id="UP000008183">
    <property type="component" value="Chromosome"/>
</dbReference>
<dbReference type="GO" id="GO:0005737">
    <property type="term" value="C:cytoplasm"/>
    <property type="evidence" value="ECO:0000318"/>
    <property type="project" value="GO_Central"/>
</dbReference>
<dbReference type="GO" id="GO:0009376">
    <property type="term" value="C:HslUV protease complex"/>
    <property type="evidence" value="ECO:0007669"/>
    <property type="project" value="UniProtKB-UniRule"/>
</dbReference>
<dbReference type="GO" id="GO:0005839">
    <property type="term" value="C:proteasome core complex"/>
    <property type="evidence" value="ECO:0007669"/>
    <property type="project" value="InterPro"/>
</dbReference>
<dbReference type="GO" id="GO:0046872">
    <property type="term" value="F:metal ion binding"/>
    <property type="evidence" value="ECO:0007669"/>
    <property type="project" value="UniProtKB-KW"/>
</dbReference>
<dbReference type="GO" id="GO:0004298">
    <property type="term" value="F:threonine-type endopeptidase activity"/>
    <property type="evidence" value="ECO:0007669"/>
    <property type="project" value="UniProtKB-KW"/>
</dbReference>
<dbReference type="GO" id="GO:0051603">
    <property type="term" value="P:proteolysis involved in protein catabolic process"/>
    <property type="evidence" value="ECO:0000318"/>
    <property type="project" value="GO_Central"/>
</dbReference>
<dbReference type="CDD" id="cd01913">
    <property type="entry name" value="protease_HslV"/>
    <property type="match status" value="1"/>
</dbReference>
<dbReference type="FunFam" id="3.60.20.10:FF:000002">
    <property type="entry name" value="ATP-dependent protease subunit HslV"/>
    <property type="match status" value="1"/>
</dbReference>
<dbReference type="Gene3D" id="3.60.20.10">
    <property type="entry name" value="Glutamine Phosphoribosylpyrophosphate, subunit 1, domain 1"/>
    <property type="match status" value="1"/>
</dbReference>
<dbReference type="HAMAP" id="MF_00248">
    <property type="entry name" value="HslV"/>
    <property type="match status" value="1"/>
</dbReference>
<dbReference type="InterPro" id="IPR022281">
    <property type="entry name" value="ATP-dep_Prtase_HsIV_su"/>
</dbReference>
<dbReference type="InterPro" id="IPR029055">
    <property type="entry name" value="Ntn_hydrolases_N"/>
</dbReference>
<dbReference type="InterPro" id="IPR001353">
    <property type="entry name" value="Proteasome_sua/b"/>
</dbReference>
<dbReference type="InterPro" id="IPR023333">
    <property type="entry name" value="Proteasome_suB-type"/>
</dbReference>
<dbReference type="NCBIfam" id="TIGR03692">
    <property type="entry name" value="ATP_dep_HslV"/>
    <property type="match status" value="1"/>
</dbReference>
<dbReference type="NCBIfam" id="NF003964">
    <property type="entry name" value="PRK05456.1"/>
    <property type="match status" value="1"/>
</dbReference>
<dbReference type="PANTHER" id="PTHR32194:SF0">
    <property type="entry name" value="ATP-DEPENDENT PROTEASE SUBUNIT HSLV"/>
    <property type="match status" value="1"/>
</dbReference>
<dbReference type="PANTHER" id="PTHR32194">
    <property type="entry name" value="METALLOPROTEASE TLDD"/>
    <property type="match status" value="1"/>
</dbReference>
<dbReference type="Pfam" id="PF00227">
    <property type="entry name" value="Proteasome"/>
    <property type="match status" value="1"/>
</dbReference>
<dbReference type="PIRSF" id="PIRSF039093">
    <property type="entry name" value="HslV"/>
    <property type="match status" value="1"/>
</dbReference>
<dbReference type="SUPFAM" id="SSF56235">
    <property type="entry name" value="N-terminal nucleophile aminohydrolases (Ntn hydrolases)"/>
    <property type="match status" value="1"/>
</dbReference>
<dbReference type="PROSITE" id="PS51476">
    <property type="entry name" value="PROTEASOME_BETA_2"/>
    <property type="match status" value="1"/>
</dbReference>
<comment type="function">
    <text evidence="2">Protease subunit of a proteasome-like degradation complex believed to be a general protein degrading machinery.</text>
</comment>
<comment type="catalytic activity">
    <reaction evidence="2">
        <text>ATP-dependent cleavage of peptide bonds with broad specificity.</text>
        <dbReference type="EC" id="3.4.25.2"/>
    </reaction>
</comment>
<comment type="activity regulation">
    <text evidence="1">Allosterically activated by HslU binding.</text>
</comment>
<comment type="subunit">
    <text evidence="2">A double ring-shaped homohexamer of HslV is capped on each side by a ring-shaped HslU homohexamer. The assembly of the HslU/HslV complex is dependent on binding of ATP.</text>
</comment>
<comment type="subcellular location">
    <subcellularLocation>
        <location evidence="1">Cytoplasm</location>
    </subcellularLocation>
</comment>
<comment type="miscellaneous">
    <text>According to PubMed:12646382 the propeptide is autoprocessed in 20% of the cases in the expression system (E.coli).</text>
</comment>
<comment type="similarity">
    <text evidence="3">Belongs to the peptidase T1B family. HslV subfamily.</text>
</comment>
<reference key="1">
    <citation type="journal article" date="1999" name="Nature">
        <title>Evidence for lateral gene transfer between Archaea and Bacteria from genome sequence of Thermotoga maritima.</title>
        <authorList>
            <person name="Nelson K.E."/>
            <person name="Clayton R.A."/>
            <person name="Gill S.R."/>
            <person name="Gwinn M.L."/>
            <person name="Dodson R.J."/>
            <person name="Haft D.H."/>
            <person name="Hickey E.K."/>
            <person name="Peterson J.D."/>
            <person name="Nelson W.C."/>
            <person name="Ketchum K.A."/>
            <person name="McDonald L.A."/>
            <person name="Utterback T.R."/>
            <person name="Malek J.A."/>
            <person name="Linher K.D."/>
            <person name="Garrett M.M."/>
            <person name="Stewart A.M."/>
            <person name="Cotton M.D."/>
            <person name="Pratt M.S."/>
            <person name="Phillips C.A."/>
            <person name="Richardson D.L."/>
            <person name="Heidelberg J.F."/>
            <person name="Sutton G.G."/>
            <person name="Fleischmann R.D."/>
            <person name="Eisen J.A."/>
            <person name="White O."/>
            <person name="Salzberg S.L."/>
            <person name="Smith H.O."/>
            <person name="Venter J.C."/>
            <person name="Fraser C.M."/>
        </authorList>
    </citation>
    <scope>NUCLEOTIDE SEQUENCE [LARGE SCALE GENOMIC DNA]</scope>
    <source>
        <strain>ATCC 43589 / DSM 3109 / JCM 10099 / NBRC 100826 / MSB8</strain>
    </source>
</reference>
<reference key="2">
    <citation type="journal article" date="2003" name="Biophys. Chem.">
        <title>Isolation and characterization of the prokaryotic proteasome homolog HslVU (ClpQY) from Thermotoga maritima and the crystal structure of HslV.</title>
        <authorList>
            <person name="Song H.K."/>
            <person name="Bochtler M."/>
            <person name="Azim M.K."/>
            <person name="Hartmann C."/>
            <person name="Huber R."/>
            <person name="Ramachandran R."/>
        </authorList>
    </citation>
    <scope>X-RAY CRYSTALLOGRAPHY (2.1 ANGSTROMS) OF 6-176 IN COMPLEX WITH SODIUM</scope>
    <scope>FUNCTION</scope>
    <scope>PROPEPTIDE</scope>
    <scope>CATALYTIC ACTIVITY</scope>
    <scope>BIOPHYSICOCHEMICAL PROPERTIES</scope>
</reference>
<organism>
    <name type="scientific">Thermotoga maritima (strain ATCC 43589 / DSM 3109 / JCM 10099 / NBRC 100826 / MSB8)</name>
    <dbReference type="NCBI Taxonomy" id="243274"/>
    <lineage>
        <taxon>Bacteria</taxon>
        <taxon>Thermotogati</taxon>
        <taxon>Thermotogota</taxon>
        <taxon>Thermotogae</taxon>
        <taxon>Thermotogales</taxon>
        <taxon>Thermotogaceae</taxon>
        <taxon>Thermotoga</taxon>
    </lineage>
</organism>
<evidence type="ECO:0000250" key="1"/>
<evidence type="ECO:0000269" key="2">
    <source>
    </source>
</evidence>
<evidence type="ECO:0000305" key="3"/>
<evidence type="ECO:0007829" key="4">
    <source>
        <dbReference type="PDB" id="1M4Y"/>
    </source>
</evidence>
<feature type="propeptide" id="PRO_0000395618" description="Removed in mature form" evidence="3">
    <location>
        <begin position="1"/>
        <end position="5"/>
    </location>
</feature>
<feature type="chain" id="PRO_0000148154" description="ATP-dependent protease subunit HslV">
    <location>
        <begin position="6"/>
        <end position="176"/>
    </location>
</feature>
<feature type="active site" evidence="1">
    <location>
        <position position="6"/>
    </location>
</feature>
<feature type="binding site" evidence="2">
    <location>
        <position position="161"/>
    </location>
    <ligand>
        <name>Na(+)</name>
        <dbReference type="ChEBI" id="CHEBI:29101"/>
    </ligand>
</feature>
<feature type="binding site" evidence="2">
    <location>
        <position position="164"/>
    </location>
    <ligand>
        <name>Na(+)</name>
        <dbReference type="ChEBI" id="CHEBI:29101"/>
    </ligand>
</feature>
<feature type="binding site" evidence="2">
    <location>
        <position position="167"/>
    </location>
    <ligand>
        <name>Na(+)</name>
        <dbReference type="ChEBI" id="CHEBI:29101"/>
    </ligand>
</feature>
<feature type="strand" evidence="4">
    <location>
        <begin position="8"/>
        <end position="13"/>
    </location>
</feature>
<feature type="strand" evidence="4">
    <location>
        <begin position="16"/>
        <end position="21"/>
    </location>
</feature>
<feature type="strand" evidence="4">
    <location>
        <begin position="25"/>
        <end position="27"/>
    </location>
</feature>
<feature type="strand" evidence="4">
    <location>
        <begin position="30"/>
        <end position="34"/>
    </location>
</feature>
<feature type="strand" evidence="4">
    <location>
        <begin position="39"/>
        <end position="42"/>
    </location>
</feature>
<feature type="turn" evidence="4">
    <location>
        <begin position="43"/>
        <end position="46"/>
    </location>
</feature>
<feature type="strand" evidence="4">
    <location>
        <begin position="47"/>
        <end position="53"/>
    </location>
</feature>
<feature type="helix" evidence="4">
    <location>
        <begin position="55"/>
        <end position="71"/>
    </location>
</feature>
<feature type="turn" evidence="4">
    <location>
        <begin position="72"/>
        <end position="74"/>
    </location>
</feature>
<feature type="helix" evidence="4">
    <location>
        <begin position="76"/>
        <end position="89"/>
    </location>
</feature>
<feature type="helix" evidence="4">
    <location>
        <begin position="93"/>
        <end position="95"/>
    </location>
</feature>
<feature type="strand" evidence="4">
    <location>
        <begin position="99"/>
        <end position="103"/>
    </location>
</feature>
<feature type="strand" evidence="4">
    <location>
        <begin position="108"/>
        <end position="111"/>
    </location>
</feature>
<feature type="strand" evidence="4">
    <location>
        <begin position="121"/>
        <end position="128"/>
    </location>
</feature>
<feature type="helix" evidence="4">
    <location>
        <begin position="131"/>
        <end position="144"/>
    </location>
</feature>
<feature type="helix" evidence="4">
    <location>
        <begin position="149"/>
        <end position="163"/>
    </location>
</feature>
<feature type="strand" evidence="4">
    <location>
        <begin position="172"/>
        <end position="175"/>
    </location>
</feature>
<gene>
    <name type="primary">hslV</name>
    <name type="ordered locus">TM_0521</name>
</gene>
<sequence>MKFHGTTILVVRRNGQTVMGGDGQVTFGSTVLKGNARKVRKLGEGKVLAGFAGSVADAMTLFDRFEAKLREWGGNLTKAAVELAKDWRTDRVLRRLEALLLVADKENIFIISGNGEVIQPDDDAAAIGSGGPYALAAAKALLRNTDLSAREIVEKAMTIAGEICIYTNQNIVIEEV</sequence>
<protein>
    <recommendedName>
        <fullName>ATP-dependent protease subunit HslV</fullName>
        <ecNumber>3.4.25.2</ecNumber>
    </recommendedName>
</protein>
<keyword id="KW-0002">3D-structure</keyword>
<keyword id="KW-0021">Allosteric enzyme</keyword>
<keyword id="KW-0963">Cytoplasm</keyword>
<keyword id="KW-0378">Hydrolase</keyword>
<keyword id="KW-0479">Metal-binding</keyword>
<keyword id="KW-0645">Protease</keyword>
<keyword id="KW-1185">Reference proteome</keyword>
<keyword id="KW-0915">Sodium</keyword>
<keyword id="KW-0888">Threonine protease</keyword>
<proteinExistence type="evidence at protein level"/>
<accession>Q9WYZ1</accession>